<keyword id="KW-0012">Acyltransferase</keyword>
<keyword id="KW-0963">Cytoplasm</keyword>
<keyword id="KW-0408">Iron</keyword>
<keyword id="KW-0479">Metal-binding</keyword>
<keyword id="KW-0808">Transferase</keyword>
<keyword id="KW-0819">tRNA processing</keyword>
<sequence length="341" mass="37006">MKKILGIESSCDDTSVSIITEDREILSNIVISQNTEHADYKGVVPEIAARSHLANLEKAMKQALLESNTSLDEITAIAATSGPGLIGGVIVGSMFAKSLSSVLNKPFIAVNHLEGHALTARLTDNIPYPYLLLLASGGHCQFVAVLGLGKYKILGSTIDDAVGEAFDKVAKMLDLPFPGGPKIEKRAKLGDPYKYKFPKPIINSGDCNMSFSGLKTAVRTLIMSLQEINDTIINDIAASFQFTIGEILSSKILEAIKVYEQITNDFNRNIVIAGGVAANKYLQELLSNCTKIHGYQLIYPPTTLCTDNAAMIAYAGLERYNNGLFTPLNFCPKARWSLEEI</sequence>
<reference key="1">
    <citation type="journal article" date="2006" name="PLoS Genet.">
        <title>Genome sequence of Rickettsia bellii illuminates the role of amoebae in gene exchanges between intracellular pathogens.</title>
        <authorList>
            <person name="Ogata H."/>
            <person name="La Scola B."/>
            <person name="Audic S."/>
            <person name="Renesto P."/>
            <person name="Blanc G."/>
            <person name="Robert C."/>
            <person name="Fournier P.-E."/>
            <person name="Claverie J.-M."/>
            <person name="Raoult D."/>
        </authorList>
    </citation>
    <scope>NUCLEOTIDE SEQUENCE [LARGE SCALE GENOMIC DNA]</scope>
    <source>
        <strain>RML369-C</strain>
    </source>
</reference>
<feature type="chain" id="PRO_0000303522" description="tRNA N6-adenosine threonylcarbamoyltransferase">
    <location>
        <begin position="1"/>
        <end position="341"/>
    </location>
</feature>
<feature type="binding site" evidence="1">
    <location>
        <position position="112"/>
    </location>
    <ligand>
        <name>Fe cation</name>
        <dbReference type="ChEBI" id="CHEBI:24875"/>
    </ligand>
</feature>
<feature type="binding site" evidence="1">
    <location>
        <position position="116"/>
    </location>
    <ligand>
        <name>Fe cation</name>
        <dbReference type="ChEBI" id="CHEBI:24875"/>
    </ligand>
</feature>
<feature type="binding site" evidence="1">
    <location>
        <begin position="134"/>
        <end position="138"/>
    </location>
    <ligand>
        <name>substrate</name>
    </ligand>
</feature>
<feature type="binding site" evidence="1">
    <location>
        <position position="167"/>
    </location>
    <ligand>
        <name>substrate</name>
    </ligand>
</feature>
<feature type="binding site" evidence="1">
    <location>
        <position position="180"/>
    </location>
    <ligand>
        <name>substrate</name>
    </ligand>
</feature>
<feature type="binding site" evidence="1">
    <location>
        <position position="279"/>
    </location>
    <ligand>
        <name>substrate</name>
    </ligand>
</feature>
<feature type="binding site" evidence="1">
    <location>
        <position position="307"/>
    </location>
    <ligand>
        <name>Fe cation</name>
        <dbReference type="ChEBI" id="CHEBI:24875"/>
    </ligand>
</feature>
<comment type="function">
    <text evidence="1">Required for the formation of a threonylcarbamoyl group on adenosine at position 37 (t(6)A37) in tRNAs that read codons beginning with adenine. Is involved in the transfer of the threonylcarbamoyl moiety of threonylcarbamoyl-AMP (TC-AMP) to the N6 group of A37, together with TsaE and TsaB. TsaD likely plays a direct catalytic role in this reaction.</text>
</comment>
<comment type="catalytic activity">
    <reaction evidence="1">
        <text>L-threonylcarbamoyladenylate + adenosine(37) in tRNA = N(6)-L-threonylcarbamoyladenosine(37) in tRNA + AMP + H(+)</text>
        <dbReference type="Rhea" id="RHEA:37059"/>
        <dbReference type="Rhea" id="RHEA-COMP:10162"/>
        <dbReference type="Rhea" id="RHEA-COMP:10163"/>
        <dbReference type="ChEBI" id="CHEBI:15378"/>
        <dbReference type="ChEBI" id="CHEBI:73682"/>
        <dbReference type="ChEBI" id="CHEBI:74411"/>
        <dbReference type="ChEBI" id="CHEBI:74418"/>
        <dbReference type="ChEBI" id="CHEBI:456215"/>
        <dbReference type="EC" id="2.3.1.234"/>
    </reaction>
</comment>
<comment type="cofactor">
    <cofactor evidence="1">
        <name>Fe(2+)</name>
        <dbReference type="ChEBI" id="CHEBI:29033"/>
    </cofactor>
    <text evidence="1">Binds 1 Fe(2+) ion per subunit.</text>
</comment>
<comment type="subcellular location">
    <subcellularLocation>
        <location evidence="1">Cytoplasm</location>
    </subcellularLocation>
</comment>
<comment type="similarity">
    <text evidence="1">Belongs to the KAE1 / TsaD family.</text>
</comment>
<accession>Q1RH23</accession>
<proteinExistence type="inferred from homology"/>
<evidence type="ECO:0000255" key="1">
    <source>
        <dbReference type="HAMAP-Rule" id="MF_01445"/>
    </source>
</evidence>
<name>TSAD_RICBR</name>
<gene>
    <name evidence="1" type="primary">tsaD</name>
    <name type="synonym">gcp</name>
    <name type="ordered locus">RBE_1260</name>
</gene>
<organism>
    <name type="scientific">Rickettsia bellii (strain RML369-C)</name>
    <dbReference type="NCBI Taxonomy" id="336407"/>
    <lineage>
        <taxon>Bacteria</taxon>
        <taxon>Pseudomonadati</taxon>
        <taxon>Pseudomonadota</taxon>
        <taxon>Alphaproteobacteria</taxon>
        <taxon>Rickettsiales</taxon>
        <taxon>Rickettsiaceae</taxon>
        <taxon>Rickettsieae</taxon>
        <taxon>Rickettsia</taxon>
        <taxon>belli group</taxon>
    </lineage>
</organism>
<dbReference type="EC" id="2.3.1.234" evidence="1"/>
<dbReference type="EMBL" id="CP000087">
    <property type="protein sequence ID" value="ABE05341.1"/>
    <property type="molecule type" value="Genomic_DNA"/>
</dbReference>
<dbReference type="RefSeq" id="WP_011477913.1">
    <property type="nucleotide sequence ID" value="NC_007940.1"/>
</dbReference>
<dbReference type="SMR" id="Q1RH23"/>
<dbReference type="KEGG" id="rbe:RBE_1260"/>
<dbReference type="eggNOG" id="COG0533">
    <property type="taxonomic scope" value="Bacteria"/>
</dbReference>
<dbReference type="HOGENOM" id="CLU_023208_0_2_5"/>
<dbReference type="OrthoDB" id="9806197at2"/>
<dbReference type="Proteomes" id="UP000001951">
    <property type="component" value="Chromosome"/>
</dbReference>
<dbReference type="GO" id="GO:0005737">
    <property type="term" value="C:cytoplasm"/>
    <property type="evidence" value="ECO:0007669"/>
    <property type="project" value="UniProtKB-SubCell"/>
</dbReference>
<dbReference type="GO" id="GO:0005506">
    <property type="term" value="F:iron ion binding"/>
    <property type="evidence" value="ECO:0007669"/>
    <property type="project" value="UniProtKB-UniRule"/>
</dbReference>
<dbReference type="GO" id="GO:0061711">
    <property type="term" value="F:N(6)-L-threonylcarbamoyladenine synthase activity"/>
    <property type="evidence" value="ECO:0007669"/>
    <property type="project" value="UniProtKB-EC"/>
</dbReference>
<dbReference type="GO" id="GO:0002949">
    <property type="term" value="P:tRNA threonylcarbamoyladenosine modification"/>
    <property type="evidence" value="ECO:0007669"/>
    <property type="project" value="UniProtKB-UniRule"/>
</dbReference>
<dbReference type="CDD" id="cd24133">
    <property type="entry name" value="ASKHA_NBD_TsaD_bac"/>
    <property type="match status" value="1"/>
</dbReference>
<dbReference type="FunFam" id="3.30.420.40:FF:000012">
    <property type="entry name" value="tRNA N6-adenosine threonylcarbamoyltransferase"/>
    <property type="match status" value="1"/>
</dbReference>
<dbReference type="Gene3D" id="3.30.420.40">
    <property type="match status" value="2"/>
</dbReference>
<dbReference type="HAMAP" id="MF_01445">
    <property type="entry name" value="TsaD"/>
    <property type="match status" value="1"/>
</dbReference>
<dbReference type="InterPro" id="IPR043129">
    <property type="entry name" value="ATPase_NBD"/>
</dbReference>
<dbReference type="InterPro" id="IPR000905">
    <property type="entry name" value="Gcp-like_dom"/>
</dbReference>
<dbReference type="InterPro" id="IPR017861">
    <property type="entry name" value="KAE1/TsaD"/>
</dbReference>
<dbReference type="InterPro" id="IPR017860">
    <property type="entry name" value="Peptidase_M22_CS"/>
</dbReference>
<dbReference type="InterPro" id="IPR022450">
    <property type="entry name" value="TsaD"/>
</dbReference>
<dbReference type="NCBIfam" id="TIGR00329">
    <property type="entry name" value="gcp_kae1"/>
    <property type="match status" value="1"/>
</dbReference>
<dbReference type="NCBIfam" id="TIGR03723">
    <property type="entry name" value="T6A_TsaD_YgjD"/>
    <property type="match status" value="1"/>
</dbReference>
<dbReference type="PANTHER" id="PTHR11735">
    <property type="entry name" value="TRNA N6-ADENOSINE THREONYLCARBAMOYLTRANSFERASE"/>
    <property type="match status" value="1"/>
</dbReference>
<dbReference type="PANTHER" id="PTHR11735:SF6">
    <property type="entry name" value="TRNA N6-ADENOSINE THREONYLCARBAMOYLTRANSFERASE, MITOCHONDRIAL"/>
    <property type="match status" value="1"/>
</dbReference>
<dbReference type="Pfam" id="PF00814">
    <property type="entry name" value="TsaD"/>
    <property type="match status" value="1"/>
</dbReference>
<dbReference type="PRINTS" id="PR00789">
    <property type="entry name" value="OSIALOPTASE"/>
</dbReference>
<dbReference type="SUPFAM" id="SSF53067">
    <property type="entry name" value="Actin-like ATPase domain"/>
    <property type="match status" value="2"/>
</dbReference>
<dbReference type="PROSITE" id="PS01016">
    <property type="entry name" value="GLYCOPROTEASE"/>
    <property type="match status" value="1"/>
</dbReference>
<protein>
    <recommendedName>
        <fullName evidence="1">tRNA N6-adenosine threonylcarbamoyltransferase</fullName>
        <ecNumber evidence="1">2.3.1.234</ecNumber>
    </recommendedName>
    <alternativeName>
        <fullName evidence="1">N6-L-threonylcarbamoyladenine synthase</fullName>
        <shortName evidence="1">t(6)A synthase</shortName>
    </alternativeName>
    <alternativeName>
        <fullName evidence="1">t(6)A37 threonylcarbamoyladenosine biosynthesis protein TsaD</fullName>
    </alternativeName>
    <alternativeName>
        <fullName evidence="1">tRNA threonylcarbamoyladenosine biosynthesis protein TsaD</fullName>
    </alternativeName>
</protein>